<evidence type="ECO:0000250" key="1">
    <source>
        <dbReference type="UniProtKB" id="D3ZMK9"/>
    </source>
</evidence>
<evidence type="ECO:0000250" key="2">
    <source>
        <dbReference type="UniProtKB" id="Q571I4"/>
    </source>
</evidence>
<evidence type="ECO:0000255" key="3">
    <source>
        <dbReference type="PROSITE-ProRule" id="PRU00159"/>
    </source>
</evidence>
<evidence type="ECO:0000256" key="4">
    <source>
        <dbReference type="SAM" id="MobiDB-lite"/>
    </source>
</evidence>
<evidence type="ECO:0000269" key="5">
    <source>
    </source>
</evidence>
<evidence type="ECO:0000269" key="6">
    <source>
    </source>
</evidence>
<evidence type="ECO:0000269" key="7">
    <source>
    </source>
</evidence>
<evidence type="ECO:0000269" key="8">
    <source>
    </source>
</evidence>
<evidence type="ECO:0000269" key="9">
    <source ref="2"/>
</evidence>
<evidence type="ECO:0000303" key="10">
    <source>
    </source>
</evidence>
<evidence type="ECO:0000303" key="11">
    <source>
    </source>
</evidence>
<evidence type="ECO:0000305" key="12"/>
<evidence type="ECO:0000312" key="13">
    <source>
        <dbReference type="HGNC" id="HGNC:25438"/>
    </source>
</evidence>
<evidence type="ECO:0007744" key="14">
    <source>
        <dbReference type="PDB" id="5VE6"/>
    </source>
</evidence>
<evidence type="ECO:0007744" key="15">
    <source>
    </source>
</evidence>
<evidence type="ECO:0007744" key="16">
    <source>
    </source>
</evidence>
<evidence type="ECO:0007744" key="17">
    <source>
    </source>
</evidence>
<evidence type="ECO:0007744" key="18">
    <source>
    </source>
</evidence>
<evidence type="ECO:0007744" key="19">
    <source>
    </source>
</evidence>
<evidence type="ECO:0007829" key="20">
    <source>
        <dbReference type="PDB" id="5VE6"/>
    </source>
</evidence>
<reference key="1">
    <citation type="journal article" date="2006" name="Nature">
        <title>DNA sequence and analysis of human chromosome 8.</title>
        <authorList>
            <person name="Nusbaum C."/>
            <person name="Mikkelsen T.S."/>
            <person name="Zody M.C."/>
            <person name="Asakawa S."/>
            <person name="Taudien S."/>
            <person name="Garber M."/>
            <person name="Kodira C.D."/>
            <person name="Schueler M.G."/>
            <person name="Shimizu A."/>
            <person name="Whittaker C.A."/>
            <person name="Chang J.L."/>
            <person name="Cuomo C.A."/>
            <person name="Dewar K."/>
            <person name="FitzGerald M.G."/>
            <person name="Yang X."/>
            <person name="Allen N.R."/>
            <person name="Anderson S."/>
            <person name="Asakawa T."/>
            <person name="Blechschmidt K."/>
            <person name="Bloom T."/>
            <person name="Borowsky M.L."/>
            <person name="Butler J."/>
            <person name="Cook A."/>
            <person name="Corum B."/>
            <person name="DeArellano K."/>
            <person name="DeCaprio D."/>
            <person name="Dooley K.T."/>
            <person name="Dorris L. III"/>
            <person name="Engels R."/>
            <person name="Gloeckner G."/>
            <person name="Hafez N."/>
            <person name="Hagopian D.S."/>
            <person name="Hall J.L."/>
            <person name="Ishikawa S.K."/>
            <person name="Jaffe D.B."/>
            <person name="Kamat A."/>
            <person name="Kudoh J."/>
            <person name="Lehmann R."/>
            <person name="Lokitsang T."/>
            <person name="Macdonald P."/>
            <person name="Major J.E."/>
            <person name="Matthews C.D."/>
            <person name="Mauceli E."/>
            <person name="Menzel U."/>
            <person name="Mihalev A.H."/>
            <person name="Minoshima S."/>
            <person name="Murayama Y."/>
            <person name="Naylor J.W."/>
            <person name="Nicol R."/>
            <person name="Nguyen C."/>
            <person name="O'Leary S.B."/>
            <person name="O'Neill K."/>
            <person name="Parker S.C.J."/>
            <person name="Polley A."/>
            <person name="Raymond C.K."/>
            <person name="Reichwald K."/>
            <person name="Rodriguez J."/>
            <person name="Sasaki T."/>
            <person name="Schilhabel M."/>
            <person name="Siddiqui R."/>
            <person name="Smith C.L."/>
            <person name="Sneddon T.P."/>
            <person name="Talamas J.A."/>
            <person name="Tenzin P."/>
            <person name="Topham K."/>
            <person name="Venkataraman V."/>
            <person name="Wen G."/>
            <person name="Yamazaki S."/>
            <person name="Young S.K."/>
            <person name="Zeng Q."/>
            <person name="Zimmer A.R."/>
            <person name="Rosenthal A."/>
            <person name="Birren B.W."/>
            <person name="Platzer M."/>
            <person name="Shimizu N."/>
            <person name="Lander E.S."/>
        </authorList>
    </citation>
    <scope>NUCLEOTIDE SEQUENCE [LARGE SCALE GENOMIC DNA]</scope>
</reference>
<reference key="2">
    <citation type="submission" date="2003-02" db="EMBL/GenBank/DDBJ databases">
        <title>The nucleotide sequence of a long cDNA clone isolated from human spleen.</title>
        <authorList>
            <person name="Jikuya H."/>
            <person name="Takano J."/>
            <person name="Nomura N."/>
            <person name="Kikuno R."/>
            <person name="Nagase T."/>
            <person name="Ohara O."/>
        </authorList>
    </citation>
    <scope>NUCLEOTIDE SEQUENCE [MRNA] OF 24-1406</scope>
    <scope>VARIANTS GLN-404; LEU-569; CYS-578 AND THR-1113</scope>
    <source>
        <tissue>Spleen</tissue>
    </source>
</reference>
<reference key="3">
    <citation type="journal article" date="2007" name="BMC Genomics">
        <title>The full-ORF clone resource of the German cDNA consortium.</title>
        <authorList>
            <person name="Bechtel S."/>
            <person name="Rosenfelder H."/>
            <person name="Duda A."/>
            <person name="Schmidt C.P."/>
            <person name="Ernst U."/>
            <person name="Wellenreuther R."/>
            <person name="Mehrle A."/>
            <person name="Schuster C."/>
            <person name="Bahr A."/>
            <person name="Bloecker H."/>
            <person name="Heubner D."/>
            <person name="Hoerlein A."/>
            <person name="Michel G."/>
            <person name="Wedler H."/>
            <person name="Koehrer K."/>
            <person name="Ottenwaelder B."/>
            <person name="Poustka A."/>
            <person name="Wiemann S."/>
            <person name="Schupp I."/>
        </authorList>
    </citation>
    <scope>NUCLEOTIDE SEQUENCE [LARGE SCALE MRNA] OF 820-1406</scope>
    <scope>VARIANT THR-1113</scope>
    <source>
        <tissue>Amygdala</tissue>
    </source>
</reference>
<reference key="4">
    <citation type="journal article" date="2002" name="Science">
        <title>The protein kinase complement of the human genome.</title>
        <authorList>
            <person name="Manning G."/>
            <person name="Whyte D.B."/>
            <person name="Martinez R."/>
            <person name="Hunter T."/>
            <person name="Sudarsanam S."/>
        </authorList>
    </citation>
    <scope>IDENTIFICATION</scope>
</reference>
<reference key="5">
    <citation type="journal article" date="2008" name="Proc. Natl. Acad. Sci. U.S.A.">
        <title>A quantitative atlas of mitotic phosphorylation.</title>
        <authorList>
            <person name="Dephoure N."/>
            <person name="Zhou C."/>
            <person name="Villen J."/>
            <person name="Beausoleil S.A."/>
            <person name="Bakalarski C.E."/>
            <person name="Elledge S.J."/>
            <person name="Gygi S.P."/>
        </authorList>
    </citation>
    <scope>PHOSPHORYLATION [LARGE SCALE ANALYSIS] AT SER-696 AND SER-745</scope>
    <scope>IDENTIFICATION BY MASS SPECTROMETRY [LARGE SCALE ANALYSIS]</scope>
    <source>
        <tissue>Cervix carcinoma</tissue>
    </source>
</reference>
<reference key="6">
    <citation type="journal article" date="2009" name="Sci. Signal.">
        <title>Quantitative phosphoproteomic analysis of T cell receptor signaling reveals system-wide modulation of protein-protein interactions.</title>
        <authorList>
            <person name="Mayya V."/>
            <person name="Lundgren D.H."/>
            <person name="Hwang S.-I."/>
            <person name="Rezaul K."/>
            <person name="Wu L."/>
            <person name="Eng J.K."/>
            <person name="Rodionov V."/>
            <person name="Han D.K."/>
        </authorList>
    </citation>
    <scope>PHOSPHORYLATION [LARGE SCALE ANALYSIS] AT SER-745</scope>
    <scope>IDENTIFICATION BY MASS SPECTROMETRY [LARGE SCALE ANALYSIS]</scope>
    <source>
        <tissue>Leukemic T-cell</tissue>
    </source>
</reference>
<reference key="7">
    <citation type="journal article" date="2011" name="Sci. Signal.">
        <title>System-wide temporal characterization of the proteome and phosphoproteome of human embryonic stem cell differentiation.</title>
        <authorList>
            <person name="Rigbolt K.T."/>
            <person name="Prokhorova T.A."/>
            <person name="Akimov V."/>
            <person name="Henningsen J."/>
            <person name="Johansen P.T."/>
            <person name="Kratchmarova I."/>
            <person name="Kassem M."/>
            <person name="Mann M."/>
            <person name="Olsen J.V."/>
            <person name="Blagoev B."/>
        </authorList>
    </citation>
    <scope>PHOSPHORYLATION [LARGE SCALE ANALYSIS] AT SER-826</scope>
    <scope>IDENTIFICATION BY MASS SPECTROMETRY [LARGE SCALE ANALYSIS]</scope>
</reference>
<reference key="8">
    <citation type="journal article" date="2013" name="J. Proteome Res.">
        <title>Toward a comprehensive characterization of a human cancer cell phosphoproteome.</title>
        <authorList>
            <person name="Zhou H."/>
            <person name="Di Palma S."/>
            <person name="Preisinger C."/>
            <person name="Peng M."/>
            <person name="Polat A.N."/>
            <person name="Heck A.J."/>
            <person name="Mohammed S."/>
        </authorList>
    </citation>
    <scope>PHOSPHORYLATION [LARGE SCALE ANALYSIS] AT SER-148; SER-696 AND SER-826</scope>
    <scope>IDENTIFICATION BY MASS SPECTROMETRY [LARGE SCALE ANALYSIS]</scope>
    <source>
        <tissue>Cervix carcinoma</tissue>
    </source>
</reference>
<reference key="9">
    <citation type="journal article" date="2014" name="J. Proteomics">
        <title>An enzyme assisted RP-RPLC approach for in-depth analysis of human liver phosphoproteome.</title>
        <authorList>
            <person name="Bian Y."/>
            <person name="Song C."/>
            <person name="Cheng K."/>
            <person name="Dong M."/>
            <person name="Wang F."/>
            <person name="Huang J."/>
            <person name="Sun D."/>
            <person name="Wang L."/>
            <person name="Ye M."/>
            <person name="Zou H."/>
        </authorList>
    </citation>
    <scope>PHOSPHORYLATION [LARGE SCALE ANALYSIS] AT SER-148 AND SER-782</scope>
    <scope>IDENTIFICATION BY MASS SPECTROMETRY [LARGE SCALE ANALYSIS]</scope>
    <source>
        <tissue>Liver</tissue>
    </source>
</reference>
<reference key="10">
    <citation type="journal article" date="2007" name="Nature">
        <title>Patterns of somatic mutation in human cancer genomes.</title>
        <authorList>
            <person name="Greenman C."/>
            <person name="Stephens P."/>
            <person name="Smith R."/>
            <person name="Dalgliesh G.L."/>
            <person name="Hunter C."/>
            <person name="Bignell G."/>
            <person name="Davies H."/>
            <person name="Teague J."/>
            <person name="Butler A."/>
            <person name="Stevens C."/>
            <person name="Edkins S."/>
            <person name="O'Meara S."/>
            <person name="Vastrik I."/>
            <person name="Schmidt E.E."/>
            <person name="Avis T."/>
            <person name="Barthorpe S."/>
            <person name="Bhamra G."/>
            <person name="Buck G."/>
            <person name="Choudhury B."/>
            <person name="Clements J."/>
            <person name="Cole J."/>
            <person name="Dicks E."/>
            <person name="Forbes S."/>
            <person name="Gray K."/>
            <person name="Halliday K."/>
            <person name="Harrison R."/>
            <person name="Hills K."/>
            <person name="Hinton J."/>
            <person name="Jenkinson A."/>
            <person name="Jones D."/>
            <person name="Menzies A."/>
            <person name="Mironenko T."/>
            <person name="Perry J."/>
            <person name="Raine K."/>
            <person name="Richardson D."/>
            <person name="Shepherd R."/>
            <person name="Small A."/>
            <person name="Tofts C."/>
            <person name="Varian J."/>
            <person name="Webb T."/>
            <person name="West S."/>
            <person name="Widaa S."/>
            <person name="Yates A."/>
            <person name="Cahill D.P."/>
            <person name="Louis D.N."/>
            <person name="Goldstraw P."/>
            <person name="Nicholson A.G."/>
            <person name="Brasseur F."/>
            <person name="Looijenga L."/>
            <person name="Weber B.L."/>
            <person name="Chiew Y.-E."/>
            <person name="DeFazio A."/>
            <person name="Greaves M.F."/>
            <person name="Green A.R."/>
            <person name="Campbell P."/>
            <person name="Birney E."/>
            <person name="Easton D.F."/>
            <person name="Chenevix-Trench G."/>
            <person name="Tan M.-H."/>
            <person name="Khoo S.K."/>
            <person name="Teh B.T."/>
            <person name="Yuen S.T."/>
            <person name="Leung S.Y."/>
            <person name="Wooster R."/>
            <person name="Futreal P.A."/>
            <person name="Stratton M.R."/>
        </authorList>
    </citation>
    <scope>VARIANTS [LARGE SCALE ANALYSIS] ILE-122; GLY-137; ILE-139; GLN-404; LEU-569; CYS-578; ALA-595; THR-662; LEU-814; ARG-851; LEU-1003; MET-1041; THR-1113 AND HIS-1315</scope>
</reference>
<reference key="11">
    <citation type="journal article" date="2016" name="Cancer Sci.">
        <title>C-terminal Src kinase-mediated EPIYA phosphorylation of Pragmin creates a feed-forward C-terminal Src kinase activation loop that promotes cell motility.</title>
        <authorList>
            <person name="Senda Y."/>
            <person name="Murata-Kamiya N."/>
            <person name="Hatakeyama M."/>
        </authorList>
    </citation>
    <scope>SUBCELLULAR LOCATION</scope>
</reference>
<reference evidence="14" key="12">
    <citation type="journal article" date="2017" name="Nat. Commun.">
        <title>Structure of SgK223 pseudokinase reveals novel mechanisms of homotypic and heterotypic association.</title>
        <authorList>
            <person name="Patel O."/>
            <person name="Griffin M.D.W."/>
            <person name="Panjikar S."/>
            <person name="Dai W."/>
            <person name="Ma X."/>
            <person name="Chan H."/>
            <person name="Zheng C."/>
            <person name="Kropp A."/>
            <person name="Murphy J.M."/>
            <person name="Daly R.J."/>
            <person name="Lucet I.S."/>
        </authorList>
    </citation>
    <scope>X-RAY CRYSTALLOGRAPHY (2.95 ANGSTROMS) OF 932-1406</scope>
    <scope>MUTAGENESIS OF LEU-955; LEU-966; ILE-1243; PHE-1271; ARG-1278; TYR-1282; PHE-1366 AND TRP-1382</scope>
    <scope>SUBUNIT</scope>
    <scope>INTERACTION WITH PEAK1</scope>
    <scope>DOMAIN</scope>
</reference>
<accession>Q86YV5</accession>
<accession>Q8N3N5</accession>
<comment type="function">
    <text evidence="1 2">Catalytically inactive protein kinase that acts as a scaffold protein. Functions as an effector of the small GTPase RND2, which stimulates RhoA activity and inhibits NGF-induced neurite outgrowth (By similarity). Promotes Src family kinase (SFK) signaling by regulating the subcellular localization of CSK, a negative regulator of these kinases, leading to the regulation of cell morphology and motility by a CSK-dependent mechanism (By similarity). Acts as a critical coactivator of Notch signaling (By similarity).</text>
</comment>
<comment type="subunit">
    <text evidence="1 2 8">Homodimer (PubMed:29079850). Dimerization leads to the catalytic activation of CSK (By similarity). Interacts (via C-terminus) with RND2 (By similarity). Interacts with CSK (via SH2 domain) in a Tyr-413 phosphorylation-dependent manner; this interaction potentiates kinase activity of CSK (By similarity). Interacts with PEAK1 (PubMed:29079850). Interacts with NOTCH1 intracellular domain (N1ICD) (By similarity). Forms a complex with N1ICD and MAML1, in a MAML1-dependent manner (By similarity).</text>
</comment>
<comment type="interaction">
    <interactant intactId="EBI-719420">
        <id>Q86YV5</id>
    </interactant>
    <interactant intactId="EBI-476295">
        <id>P31947</id>
        <label>SFN</label>
    </interactant>
    <organismsDiffer>false</organismsDiffer>
    <experiments>2</experiments>
</comment>
<comment type="interaction">
    <interactant intactId="EBI-719420">
        <id>Q86YV5</id>
    </interactant>
    <interactant intactId="EBI-356498">
        <id>P62258</id>
        <label>YWHAE</label>
    </interactant>
    <organismsDiffer>false</organismsDiffer>
    <experiments>2</experiments>
</comment>
<comment type="subcellular location">
    <subcellularLocation>
        <location evidence="1">Cytoplasm</location>
    </subcellularLocation>
    <subcellularLocation>
        <location evidence="7">Cell junction</location>
        <location evidence="7">Focal adhesion</location>
    </subcellularLocation>
    <subcellularLocation>
        <location evidence="2">Nucleus</location>
    </subcellularLocation>
    <text evidence="2">Colocalized with NOTCH1 in the nucleus.</text>
</comment>
<comment type="domain">
    <text evidence="8">The dimerization region encompasses helices both from the N- and C-terminal of the protein kinase domain.</text>
</comment>
<comment type="PTM">
    <text evidence="1">Phosphorylated by CSK on Tyr-253, Tyr-365, and Tyr-413; Tyr-413 is a primary site of phosphorylation.</text>
</comment>
<comment type="similarity">
    <text evidence="12">Belongs to the protein kinase superfamily.</text>
</comment>
<comment type="caution">
    <text evidence="1">Despite of the presence of a putative ATP-binding motif, this protein does not bind ATP, suggesting that it has no protein kinase activity.</text>
</comment>
<feature type="chain" id="PRO_0000263008" description="Inactive tyrosine-protein kinase PRAG1">
    <location>
        <begin position="1"/>
        <end position="1406"/>
    </location>
</feature>
<feature type="domain" description="Protein kinase" evidence="3">
    <location>
        <begin position="978"/>
        <end position="1329"/>
    </location>
</feature>
<feature type="region of interest" description="Disordered" evidence="4">
    <location>
        <begin position="184"/>
        <end position="205"/>
    </location>
</feature>
<feature type="region of interest" description="Disordered" evidence="4">
    <location>
        <begin position="217"/>
        <end position="248"/>
    </location>
</feature>
<feature type="region of interest" description="Disordered" evidence="4">
    <location>
        <begin position="372"/>
        <end position="470"/>
    </location>
</feature>
<feature type="region of interest" description="Disordered" evidence="4">
    <location>
        <begin position="484"/>
        <end position="854"/>
    </location>
</feature>
<feature type="region of interest" description="Required for homodimerization" evidence="1">
    <location>
        <begin position="933"/>
        <end position="976"/>
    </location>
</feature>
<feature type="region of interest" description="Disordered" evidence="4">
    <location>
        <begin position="1163"/>
        <end position="1206"/>
    </location>
</feature>
<feature type="region of interest" description="Required for homodimerization" evidence="1">
    <location>
        <begin position="1331"/>
        <end position="1406"/>
    </location>
</feature>
<feature type="compositionally biased region" description="Basic and acidic residues" evidence="4">
    <location>
        <begin position="184"/>
        <end position="193"/>
    </location>
</feature>
<feature type="compositionally biased region" description="Basic and acidic residues" evidence="4">
    <location>
        <begin position="526"/>
        <end position="542"/>
    </location>
</feature>
<feature type="compositionally biased region" description="Low complexity" evidence="4">
    <location>
        <begin position="546"/>
        <end position="576"/>
    </location>
</feature>
<feature type="compositionally biased region" description="Polar residues" evidence="4">
    <location>
        <begin position="660"/>
        <end position="671"/>
    </location>
</feature>
<feature type="compositionally biased region" description="Polar residues" evidence="4">
    <location>
        <begin position="678"/>
        <end position="695"/>
    </location>
</feature>
<feature type="compositionally biased region" description="Polar residues" evidence="4">
    <location>
        <begin position="737"/>
        <end position="746"/>
    </location>
</feature>
<feature type="compositionally biased region" description="Polar residues" evidence="4">
    <location>
        <begin position="754"/>
        <end position="770"/>
    </location>
</feature>
<feature type="compositionally biased region" description="Polar residues" evidence="4">
    <location>
        <begin position="798"/>
        <end position="808"/>
    </location>
</feature>
<feature type="compositionally biased region" description="Pro residues" evidence="4">
    <location>
        <begin position="1163"/>
        <end position="1173"/>
    </location>
</feature>
<feature type="compositionally biased region" description="Low complexity" evidence="4">
    <location>
        <begin position="1174"/>
        <end position="1202"/>
    </location>
</feature>
<feature type="modified residue" description="Phosphoserine" evidence="18 19">
    <location>
        <position position="148"/>
    </location>
</feature>
<feature type="modified residue" description="Phosphotyrosine" evidence="1">
    <location>
        <position position="253"/>
    </location>
</feature>
<feature type="modified residue" description="Phosphotyrosine" evidence="1">
    <location>
        <position position="365"/>
    </location>
</feature>
<feature type="modified residue" description="Phosphotyrosine" evidence="1">
    <location>
        <position position="413"/>
    </location>
</feature>
<feature type="modified residue" description="Phosphoserine" evidence="15 18">
    <location>
        <position position="696"/>
    </location>
</feature>
<feature type="modified residue" description="Phosphoserine" evidence="15 16">
    <location>
        <position position="745"/>
    </location>
</feature>
<feature type="modified residue" description="Phosphoserine" evidence="19">
    <location>
        <position position="782"/>
    </location>
</feature>
<feature type="modified residue" description="Phosphoserine" evidence="17 18">
    <location>
        <position position="826"/>
    </location>
</feature>
<feature type="sequence variant" id="VAR_041803" description="In dbSNP:rs55764617." evidence="5">
    <original>L</original>
    <variation>I</variation>
    <location>
        <position position="122"/>
    </location>
</feature>
<feature type="sequence variant" id="VAR_041804" description="In dbSNP:rs56290960." evidence="5">
    <original>R</original>
    <variation>G</variation>
    <location>
        <position position="137"/>
    </location>
</feature>
<feature type="sequence variant" id="VAR_041805" description="In dbSNP:rs34346032." evidence="5">
    <original>V</original>
    <variation>I</variation>
    <location>
        <position position="139"/>
    </location>
</feature>
<feature type="sequence variant" id="VAR_041806" description="In dbSNP:rs3896980." evidence="5 9">
    <original>R</original>
    <variation>Q</variation>
    <location>
        <position position="404"/>
    </location>
</feature>
<feature type="sequence variant" id="VAR_041807" description="In dbSNP:rs4840955." evidence="5 9">
    <original>P</original>
    <variation>L</variation>
    <location>
        <position position="569"/>
    </location>
</feature>
<feature type="sequence variant" id="VAR_041808" description="In dbSNP:rs4840953." evidence="5 9">
    <original>S</original>
    <variation>C</variation>
    <location>
        <position position="578"/>
    </location>
</feature>
<feature type="sequence variant" id="VAR_041809" description="In dbSNP:rs55994745." evidence="5">
    <original>P</original>
    <variation>A</variation>
    <location>
        <position position="595"/>
    </location>
</feature>
<feature type="sequence variant" id="VAR_041810" description="In dbSNP:rs56351643." evidence="5">
    <original>P</original>
    <variation>T</variation>
    <location>
        <position position="662"/>
    </location>
</feature>
<feature type="sequence variant" id="VAR_041811" description="In dbSNP:rs56207906." evidence="5">
    <original>P</original>
    <variation>L</variation>
    <location>
        <position position="814"/>
    </location>
</feature>
<feature type="sequence variant" id="VAR_041812" description="In dbSNP:rs56215812." evidence="5">
    <original>H</original>
    <variation>R</variation>
    <location>
        <position position="851"/>
    </location>
</feature>
<feature type="sequence variant" id="VAR_041813" description="In dbSNP:rs56289289." evidence="5">
    <original>S</original>
    <variation>L</variation>
    <location>
        <position position="1003"/>
    </location>
</feature>
<feature type="sequence variant" id="VAR_041814" description="In dbSNP:rs28533138." evidence="5">
    <original>V</original>
    <variation>M</variation>
    <location>
        <position position="1041"/>
    </location>
</feature>
<feature type="sequence variant" id="VAR_041815" description="In dbSNP:rs12549973." evidence="5 6 9">
    <original>A</original>
    <variation>T</variation>
    <location>
        <position position="1113"/>
    </location>
</feature>
<feature type="sequence variant" id="VAR_041816" description="In dbSNP:rs1314830862." evidence="5">
    <original>R</original>
    <variation>H</variation>
    <location>
        <position position="1315"/>
    </location>
</feature>
<feature type="mutagenesis site" description="Decreases homodimerization. Abolished interaction with PEAK1. No effect on cell migration." evidence="8">
    <original>L</original>
    <variation>A</variation>
    <location>
        <position position="955"/>
    </location>
</feature>
<feature type="mutagenesis site" description="Decreases homodimerization. Abolished interaction with PEAK1. Decreases cell migration." evidence="8">
    <original>L</original>
    <variation>A</variation>
    <location>
        <position position="966"/>
    </location>
</feature>
<feature type="mutagenesis site" description="No effect on homodimerization. Decreases oligomerization. Decreases interaction with PEAK1." evidence="8">
    <original>I</original>
    <variation>A</variation>
    <location>
        <position position="1243"/>
    </location>
</feature>
<feature type="mutagenesis site" description="Decreases homodimerization. Decreases interaction with PEAK1." evidence="8">
    <original>F</original>
    <variation>A</variation>
    <location>
        <position position="1271"/>
    </location>
</feature>
<feature type="mutagenesis site" description="Decreases homodimerization." evidence="8">
    <original>R</original>
    <variation>A</variation>
    <location>
        <position position="1278"/>
    </location>
</feature>
<feature type="mutagenesis site" description="No effect on homodimerization. Decreases oligomerization. Decreases interaction with PEAK1. No effect on cell migration." evidence="8">
    <original>Y</original>
    <variation>A</variation>
    <location>
        <position position="1282"/>
    </location>
</feature>
<feature type="mutagenesis site" description="Decreases homodimerization. Abolished interaction with PEAK1. Decreases cell migration." evidence="8">
    <original>F</original>
    <variation>A</variation>
    <location>
        <position position="1366"/>
    </location>
</feature>
<feature type="mutagenesis site" description="Decreases homodimerization. Abolished interaction with PEAK1. Decreases cell migration." evidence="8">
    <original>W</original>
    <variation>A</variation>
    <location>
        <position position="1382"/>
    </location>
</feature>
<feature type="sequence conflict" description="In Ref. 2; BAC56923 and 3; CAD38729." evidence="12" ref="2 3">
    <original>G</original>
    <variation>S</variation>
    <location>
        <position position="1226"/>
    </location>
</feature>
<feature type="helix" evidence="20">
    <location>
        <begin position="948"/>
        <end position="974"/>
    </location>
</feature>
<feature type="helix" evidence="20">
    <location>
        <begin position="988"/>
        <end position="991"/>
    </location>
</feature>
<feature type="strand" evidence="20">
    <location>
        <begin position="992"/>
        <end position="995"/>
    </location>
</feature>
<feature type="strand" evidence="20">
    <location>
        <begin position="1000"/>
        <end position="1002"/>
    </location>
</feature>
<feature type="strand" evidence="20">
    <location>
        <begin position="1004"/>
        <end position="1016"/>
    </location>
</feature>
<feature type="strand" evidence="20">
    <location>
        <begin position="1020"/>
        <end position="1026"/>
    </location>
</feature>
<feature type="strand" evidence="20">
    <location>
        <begin position="1050"/>
        <end position="1059"/>
    </location>
</feature>
<feature type="helix" evidence="20">
    <location>
        <begin position="1060"/>
        <end position="1063"/>
    </location>
</feature>
<feature type="strand" evidence="20">
    <location>
        <begin position="1084"/>
        <end position="1094"/>
    </location>
</feature>
<feature type="strand" evidence="20">
    <location>
        <begin position="1096"/>
        <end position="1099"/>
    </location>
</feature>
<feature type="helix" evidence="20">
    <location>
        <begin position="1100"/>
        <end position="1105"/>
    </location>
</feature>
<feature type="helix" evidence="20">
    <location>
        <begin position="1108"/>
        <end position="1113"/>
    </location>
</feature>
<feature type="helix" evidence="20">
    <location>
        <begin position="1115"/>
        <end position="1138"/>
    </location>
</feature>
<feature type="helix" evidence="20">
    <location>
        <begin position="1148"/>
        <end position="1150"/>
    </location>
</feature>
<feature type="strand" evidence="20">
    <location>
        <begin position="1151"/>
        <end position="1154"/>
    </location>
</feature>
<feature type="strand" evidence="20">
    <location>
        <begin position="1211"/>
        <end position="1214"/>
    </location>
</feature>
<feature type="helix" evidence="20">
    <location>
        <begin position="1246"/>
        <end position="1250"/>
    </location>
</feature>
<feature type="helix" evidence="20">
    <location>
        <begin position="1252"/>
        <end position="1264"/>
    </location>
</feature>
<feature type="helix" evidence="20">
    <location>
        <begin position="1270"/>
        <end position="1272"/>
    </location>
</feature>
<feature type="helix" evidence="20">
    <location>
        <begin position="1275"/>
        <end position="1279"/>
    </location>
</feature>
<feature type="helix" evidence="20">
    <location>
        <begin position="1284"/>
        <end position="1286"/>
    </location>
</feature>
<feature type="helix" evidence="20">
    <location>
        <begin position="1296"/>
        <end position="1307"/>
    </location>
</feature>
<feature type="turn" evidence="20">
    <location>
        <begin position="1312"/>
        <end position="1314"/>
    </location>
</feature>
<feature type="helix" evidence="20">
    <location>
        <begin position="1318"/>
        <end position="1329"/>
    </location>
</feature>
<feature type="helix" evidence="20">
    <location>
        <begin position="1348"/>
        <end position="1369"/>
    </location>
</feature>
<feature type="helix" evidence="20">
    <location>
        <begin position="1379"/>
        <end position="1389"/>
    </location>
</feature>
<feature type="helix" evidence="20">
    <location>
        <begin position="1393"/>
        <end position="1402"/>
    </location>
</feature>
<sequence length="1406" mass="149624">MHQTLCLNPESLKMSACSDFVEHIWKPGSCKNCFCLRSDHQLVAGPPQPRAGSLPPPPRLPPRPENCRLEDEGVNSSPYSKPTIAVKPTMMSSEASDVWTEANLSAEVSQVIWRRAPGKLPLPKQEDAPVVYLGSFRGVQKPAGPSTSPDGNSRCPPAYTMVGLHNLEPRGERNIAFHPVSFPEEKAVHKEKPSFPYQDRPSTQESFRQKLAAFAGTTSGCHQGPGPLRESLPSEDDSDQRCSPSGDSEGGEYCSILDCCPGSPVAKAASQTAGSRGRHGGRDCSPTCWEQGKCSGPAEQEKRGPSFPKECCSQGPTAHPSCLGPKKLSLTSEAAISSDGLSCGSGSGSGSGASSPFVPHLESDYCSLMKEPAPEKQQDPGCPGVTPSRCLGLTGEPQPPAHPREATQPEPIYAESTKRKKAAPVPSKSQAKIEHAAAAQGQGQVCTGNAWAQKAASGWGRDSPDPTPQVSATITVMAAHPEEDHRTIYLSSPDSAVGVQWPRGPVSQNSEVGEEETSAGQGLSSRESHAHSASESKPKERPAIPPKLSKSSPVGSPVSPSAGGPPVSPLADLSDGSSGGSSIGPQPPSQGPADPAPSCRTNGVAISDPSRCPQPAASSASEQRRPRFQAGTWSRQCRIEEEEEVEQELLSHSWGRETKNGPTDHSNSTTWHRLHPTDGSSGQNSKVGTGMSKSASFAFEFPKDRSGIETFSPPPPPPKSRHLLKMNKSSSDLEKVSQGSAESLSPSFRGVHVSFTTGSTDSLASDSRTCSDGGPSSELAHSPTNSGKKLFAPVPFPSGSTEDVSPSGPQQPPPLPQKKIVSRAASSPDGFFWTQGSPKPGTASPKLNLSHSETNVHDESHFSYSLSPGNRHHPVFSSSDPLEKAFKGSGHWLPAAGLAGNRGGCGSPGLQCKGAPSASSSQLSVSSQASTGSTQLQLHGLLSNISSKEGTYAKLGGLYTQSLARLVAKCEDLFMGGQKKELHFNENNWSLFKLTCNKPCCDSGDAIYYCATCSEDPGSTYAVKICKAPEPKTVSYCSPSVPVHFNIQQDCGHFVASVPSSMLSSPDAPKDPVPALPTHPPAQEQDCVVVITREVPHQTASDFVRDSAASHQAEPEAYERRVCFLLLQLCNGLEHLKEHGIIHRDLCLENLLLVHCTLQAGPGPAPAPAPAPAPAAAAPPCSSAAPPAGGTLSPAAGPASPEGPREKQLPRLIISNFLKAKQKPGGTPNLQQKKSQARLAPEIVSASQYRKFDEFQTGILIYELLHQPNPFEVRAQLRERDYRQEDLPPLPALSLYSPGLQQLAHLLLEADPIKRIRIGEAKRVLQCLLWGPRRELVQQPGTSEEALCGTLHNWIDMKRALMMMKFAEKAVDRRRGVELEDWLCCQYLASAEPGALLQSLKLLQLL</sequence>
<protein>
    <recommendedName>
        <fullName evidence="12">Inactive tyrosine-protein kinase PRAG1</fullName>
    </recommendedName>
    <alternativeName>
        <fullName>PEAK1-related kinase-activating pseudokinase 1</fullName>
    </alternativeName>
    <alternativeName>
        <fullName evidence="10">Pragmin</fullName>
    </alternativeName>
    <alternativeName>
        <fullName evidence="11">Sugen kinase 223</fullName>
        <shortName>SgK223</shortName>
    </alternativeName>
</protein>
<dbReference type="EMBL" id="AC068353">
    <property type="status" value="NOT_ANNOTATED_CDS"/>
    <property type="molecule type" value="Genomic_DNA"/>
</dbReference>
<dbReference type="EMBL" id="AC103957">
    <property type="status" value="NOT_ANNOTATED_CDS"/>
    <property type="molecule type" value="Genomic_DNA"/>
</dbReference>
<dbReference type="EMBL" id="AK122582">
    <property type="protein sequence ID" value="BAC56923.1"/>
    <property type="molecule type" value="mRNA"/>
</dbReference>
<dbReference type="EMBL" id="AL833872">
    <property type="protein sequence ID" value="CAD38729.1"/>
    <property type="molecule type" value="mRNA"/>
</dbReference>
<dbReference type="CCDS" id="CCDS43706.1"/>
<dbReference type="RefSeq" id="NP_001074295.2">
    <property type="nucleotide sequence ID" value="NM_001080826.3"/>
</dbReference>
<dbReference type="RefSeq" id="NP_001356688.1">
    <property type="nucleotide sequence ID" value="NM_001369759.1"/>
</dbReference>
<dbReference type="RefSeq" id="XP_005272426.2">
    <property type="nucleotide sequence ID" value="XM_005272369.4"/>
</dbReference>
<dbReference type="RefSeq" id="XP_005272427.2">
    <property type="nucleotide sequence ID" value="XM_005272370.4"/>
</dbReference>
<dbReference type="PDB" id="5VE6">
    <property type="method" value="X-ray"/>
    <property type="resolution" value="2.95 A"/>
    <property type="chains" value="A=932-1406"/>
</dbReference>
<dbReference type="PDB" id="8DGN">
    <property type="method" value="X-ray"/>
    <property type="resolution" value="3.16 A"/>
    <property type="chains" value="B=812-831"/>
</dbReference>
<dbReference type="PDBsum" id="5VE6"/>
<dbReference type="PDBsum" id="8DGN"/>
<dbReference type="SMR" id="Q86YV5"/>
<dbReference type="BioGRID" id="127591">
    <property type="interactions" value="30"/>
</dbReference>
<dbReference type="FunCoup" id="Q86YV5">
    <property type="interactions" value="1680"/>
</dbReference>
<dbReference type="IntAct" id="Q86YV5">
    <property type="interactions" value="14"/>
</dbReference>
<dbReference type="MINT" id="Q86YV5"/>
<dbReference type="STRING" id="9606.ENSP00000481109"/>
<dbReference type="GlyGen" id="Q86YV5">
    <property type="glycosylation" value="2 sites"/>
</dbReference>
<dbReference type="iPTMnet" id="Q86YV5"/>
<dbReference type="PhosphoSitePlus" id="Q86YV5"/>
<dbReference type="BioMuta" id="PRAG1"/>
<dbReference type="DMDM" id="327478560"/>
<dbReference type="CPTAC" id="non-CPTAC-5650"/>
<dbReference type="CPTAC" id="non-CPTAC-5651"/>
<dbReference type="jPOST" id="Q86YV5"/>
<dbReference type="MassIVE" id="Q86YV5"/>
<dbReference type="PaxDb" id="9606-ENSP00000481109"/>
<dbReference type="PeptideAtlas" id="Q86YV5"/>
<dbReference type="ProteomicsDB" id="70475"/>
<dbReference type="Pumba" id="Q86YV5"/>
<dbReference type="Antibodypedia" id="73468">
    <property type="antibodies" value="130 antibodies from 28 providers"/>
</dbReference>
<dbReference type="DNASU" id="157285"/>
<dbReference type="Ensembl" id="ENST00000615670.5">
    <property type="protein sequence ID" value="ENSP00000481109.1"/>
    <property type="gene ID" value="ENSG00000275342.6"/>
</dbReference>
<dbReference type="GeneID" id="157285"/>
<dbReference type="KEGG" id="hsa:157285"/>
<dbReference type="MANE-Select" id="ENST00000615670.5">
    <property type="protein sequence ID" value="ENSP00000481109.1"/>
    <property type="RefSeq nucleotide sequence ID" value="NM_001080826.3"/>
    <property type="RefSeq protein sequence ID" value="NP_001074295.2"/>
</dbReference>
<dbReference type="UCSC" id="uc064kbu.1">
    <property type="organism name" value="human"/>
</dbReference>
<dbReference type="AGR" id="HGNC:25438"/>
<dbReference type="CTD" id="157285"/>
<dbReference type="DisGeNET" id="157285"/>
<dbReference type="GeneCards" id="PRAG1"/>
<dbReference type="HGNC" id="HGNC:25438">
    <property type="gene designation" value="PRAG1"/>
</dbReference>
<dbReference type="HPA" id="ENSG00000275342">
    <property type="expression patterns" value="Tissue enhanced (brain, thyroid gland)"/>
</dbReference>
<dbReference type="MIM" id="617344">
    <property type="type" value="gene"/>
</dbReference>
<dbReference type="neXtProt" id="NX_Q86YV5"/>
<dbReference type="OpenTargets" id="ENSG00000275342"/>
<dbReference type="VEuPathDB" id="HostDB:ENSG00000275342"/>
<dbReference type="eggNOG" id="ENOG502QVUZ">
    <property type="taxonomic scope" value="Eukaryota"/>
</dbReference>
<dbReference type="GeneTree" id="ENSGT00940000157066"/>
<dbReference type="HOGENOM" id="CLU_005467_0_0_1"/>
<dbReference type="InParanoid" id="Q86YV5"/>
<dbReference type="OMA" id="DLKMSAC"/>
<dbReference type="OrthoDB" id="9886644at2759"/>
<dbReference type="PAN-GO" id="Q86YV5">
    <property type="GO annotations" value="2 GO annotations based on evolutionary models"/>
</dbReference>
<dbReference type="PathwayCommons" id="Q86YV5"/>
<dbReference type="Reactome" id="R-HSA-9696270">
    <property type="pathway name" value="RND2 GTPase cycle"/>
</dbReference>
<dbReference type="SignaLink" id="Q86YV5"/>
<dbReference type="BioGRID-ORCS" id="157285">
    <property type="hits" value="22 hits in 1121 CRISPR screens"/>
</dbReference>
<dbReference type="ChiTaRS" id="SGK223">
    <property type="organism name" value="human"/>
</dbReference>
<dbReference type="GenomeRNAi" id="157285"/>
<dbReference type="Pharos" id="Q86YV5">
    <property type="development level" value="Tbio"/>
</dbReference>
<dbReference type="PRO" id="PR:Q86YV5"/>
<dbReference type="Proteomes" id="UP000005640">
    <property type="component" value="Chromosome 8"/>
</dbReference>
<dbReference type="RNAct" id="Q86YV5">
    <property type="molecule type" value="protein"/>
</dbReference>
<dbReference type="Bgee" id="ENSG00000275342">
    <property type="expression patterns" value="Expressed in cerebellar vermis and 184 other cell types or tissues"/>
</dbReference>
<dbReference type="GO" id="GO:0005737">
    <property type="term" value="C:cytoplasm"/>
    <property type="evidence" value="ECO:0000250"/>
    <property type="project" value="UniProtKB"/>
</dbReference>
<dbReference type="GO" id="GO:0005829">
    <property type="term" value="C:cytosol"/>
    <property type="evidence" value="ECO:0000304"/>
    <property type="project" value="Reactome"/>
</dbReference>
<dbReference type="GO" id="GO:0005925">
    <property type="term" value="C:focal adhesion"/>
    <property type="evidence" value="ECO:0000314"/>
    <property type="project" value="UniProtKB"/>
</dbReference>
<dbReference type="GO" id="GO:0005634">
    <property type="term" value="C:nucleus"/>
    <property type="evidence" value="ECO:0000250"/>
    <property type="project" value="UniProtKB"/>
</dbReference>
<dbReference type="GO" id="GO:0042802">
    <property type="term" value="F:identical protein binding"/>
    <property type="evidence" value="ECO:0000314"/>
    <property type="project" value="UniProtKB"/>
</dbReference>
<dbReference type="GO" id="GO:0004672">
    <property type="term" value="F:protein kinase activity"/>
    <property type="evidence" value="ECO:0000318"/>
    <property type="project" value="GO_Central"/>
</dbReference>
<dbReference type="GO" id="GO:0016477">
    <property type="term" value="P:cell migration"/>
    <property type="evidence" value="ECO:0000315"/>
    <property type="project" value="UniProtKB"/>
</dbReference>
<dbReference type="GO" id="GO:0010977">
    <property type="term" value="P:negative regulation of neuron projection development"/>
    <property type="evidence" value="ECO:0000250"/>
    <property type="project" value="UniProtKB"/>
</dbReference>
<dbReference type="GO" id="GO:0035025">
    <property type="term" value="P:positive regulation of Rho protein signal transduction"/>
    <property type="evidence" value="ECO:0000250"/>
    <property type="project" value="UniProtKB"/>
</dbReference>
<dbReference type="GO" id="GO:2000145">
    <property type="term" value="P:regulation of cell motility"/>
    <property type="evidence" value="ECO:0000250"/>
    <property type="project" value="UniProtKB"/>
</dbReference>
<dbReference type="GO" id="GO:0008360">
    <property type="term" value="P:regulation of cell shape"/>
    <property type="evidence" value="ECO:0000250"/>
    <property type="project" value="UniProtKB"/>
</dbReference>
<dbReference type="GO" id="GO:0008593">
    <property type="term" value="P:regulation of Notch signaling pathway"/>
    <property type="evidence" value="ECO:0000250"/>
    <property type="project" value="UniProtKB"/>
</dbReference>
<dbReference type="DisProt" id="DP02420"/>
<dbReference type="FunFam" id="1.10.510.10:FF:000510">
    <property type="entry name" value="Inactive tyrosine-protein kinase PRAG1"/>
    <property type="match status" value="1"/>
</dbReference>
<dbReference type="Gene3D" id="1.10.510.10">
    <property type="entry name" value="Transferase(Phosphotransferase) domain 1"/>
    <property type="match status" value="1"/>
</dbReference>
<dbReference type="InterPro" id="IPR011009">
    <property type="entry name" value="Kinase-like_dom_sf"/>
</dbReference>
<dbReference type="InterPro" id="IPR051511">
    <property type="entry name" value="MitoQC_Scaffold_Kinases"/>
</dbReference>
<dbReference type="InterPro" id="IPR000719">
    <property type="entry name" value="Prot_kinase_dom"/>
</dbReference>
<dbReference type="InterPro" id="IPR001245">
    <property type="entry name" value="Ser-Thr/Tyr_kinase_cat_dom"/>
</dbReference>
<dbReference type="InterPro" id="IPR008266">
    <property type="entry name" value="Tyr_kinase_AS"/>
</dbReference>
<dbReference type="PANTHER" id="PTHR22972:SF3">
    <property type="entry name" value="INACTIVE TYROSINE-PROTEIN KINASE PRAG1"/>
    <property type="match status" value="1"/>
</dbReference>
<dbReference type="PANTHER" id="PTHR22972">
    <property type="entry name" value="SERINE/THREONINE PROTEIN KINASE"/>
    <property type="match status" value="1"/>
</dbReference>
<dbReference type="Pfam" id="PF07714">
    <property type="entry name" value="PK_Tyr_Ser-Thr"/>
    <property type="match status" value="1"/>
</dbReference>
<dbReference type="SMART" id="SM00220">
    <property type="entry name" value="S_TKc"/>
    <property type="match status" value="1"/>
</dbReference>
<dbReference type="SUPFAM" id="SSF56112">
    <property type="entry name" value="Protein kinase-like (PK-like)"/>
    <property type="match status" value="1"/>
</dbReference>
<dbReference type="PROSITE" id="PS50011">
    <property type="entry name" value="PROTEIN_KINASE_DOM"/>
    <property type="match status" value="1"/>
</dbReference>
<dbReference type="PROSITE" id="PS00109">
    <property type="entry name" value="PROTEIN_KINASE_TYR"/>
    <property type="match status" value="1"/>
</dbReference>
<name>PRAG1_HUMAN</name>
<proteinExistence type="evidence at protein level"/>
<keyword id="KW-0002">3D-structure</keyword>
<keyword id="KW-0965">Cell junction</keyword>
<keyword id="KW-0963">Cytoplasm</keyword>
<keyword id="KW-0539">Nucleus</keyword>
<keyword id="KW-0597">Phosphoprotein</keyword>
<keyword id="KW-1267">Proteomics identification</keyword>
<keyword id="KW-1185">Reference proteome</keyword>
<gene>
    <name evidence="13" type="primary">PRAG1</name>
    <name type="synonym">SGK223</name>
</gene>
<organism>
    <name type="scientific">Homo sapiens</name>
    <name type="common">Human</name>
    <dbReference type="NCBI Taxonomy" id="9606"/>
    <lineage>
        <taxon>Eukaryota</taxon>
        <taxon>Metazoa</taxon>
        <taxon>Chordata</taxon>
        <taxon>Craniata</taxon>
        <taxon>Vertebrata</taxon>
        <taxon>Euteleostomi</taxon>
        <taxon>Mammalia</taxon>
        <taxon>Eutheria</taxon>
        <taxon>Euarchontoglires</taxon>
        <taxon>Primates</taxon>
        <taxon>Haplorrhini</taxon>
        <taxon>Catarrhini</taxon>
        <taxon>Hominidae</taxon>
        <taxon>Homo</taxon>
    </lineage>
</organism>